<proteinExistence type="evidence at transcript level"/>
<protein>
    <recommendedName>
        <fullName evidence="2">Chitobiosyldiphosphodolichol beta-mannosyltransferase</fullName>
        <ecNumber evidence="2">2.4.1.142</ecNumber>
    </recommendedName>
    <alternativeName>
        <fullName>Asparagine-linked glycosylation protein 1 homolog</fullName>
    </alternativeName>
    <alternativeName>
        <fullName>Beta-1,4-mannosyltransferase</fullName>
    </alternativeName>
    <alternativeName>
        <fullName>GDP-Man:GlcNAc2-PP-dolichol mannosyltransferase</fullName>
    </alternativeName>
    <alternativeName>
        <fullName>GDP-mannose-dolichol diphosphochitobiose mannosyltransferase</fullName>
    </alternativeName>
</protein>
<name>ALG1_PONAB</name>
<feature type="chain" id="PRO_0000080251" description="Chitobiosyldiphosphodolichol beta-mannosyltransferase">
    <location>
        <begin position="1"/>
        <end position="464"/>
    </location>
</feature>
<feature type="topological domain" description="Lumenal" evidence="1">
    <location>
        <begin position="1"/>
        <end position="2"/>
    </location>
</feature>
<feature type="transmembrane region" description="Helical" evidence="3">
    <location>
        <begin position="3"/>
        <end position="23"/>
    </location>
</feature>
<feature type="topological domain" description="Cytoplasmic" evidence="1">
    <location>
        <begin position="24"/>
        <end position="99"/>
    </location>
</feature>
<feature type="intramembrane region" description="Helical" evidence="3">
    <location>
        <begin position="100"/>
        <end position="120"/>
    </location>
</feature>
<feature type="topological domain" description="Cytoplasmic" evidence="1">
    <location>
        <begin position="121"/>
        <end position="464"/>
    </location>
</feature>
<feature type="region of interest" description="Disordered" evidence="4">
    <location>
        <begin position="242"/>
        <end position="261"/>
    </location>
</feature>
<feature type="modified residue" description="Phosphoserine" evidence="2">
    <location>
        <position position="242"/>
    </location>
</feature>
<accession>Q5R7A2</accession>
<reference key="1">
    <citation type="submission" date="2004-11" db="EMBL/GenBank/DDBJ databases">
        <authorList>
            <consortium name="The German cDNA consortium"/>
        </authorList>
    </citation>
    <scope>NUCLEOTIDE SEQUENCE [LARGE SCALE MRNA]</scope>
    <source>
        <tissue>Kidney</tissue>
    </source>
</reference>
<comment type="function">
    <text evidence="2">Mannosyltransferase that operates in the biosynthetic pathway of dolichol-linked oligosaccharides, the glycan precursors employed in protein asparagine (N)-glycosylation. The assembly of dolichol-linked oligosaccharides begins on the cytosolic side of the endoplasmic reticulum membrane and finishes in its lumen. The sequential addition of sugars to dolichol pyrophosphate produces dolichol-linked oligosaccharides containing fourteen sugars, including two GlcNAcs, nine mannoses and three glucoses. Once assembled, the oligosaccharide is transferred from the lipid to nascent proteins by oligosaccharyltransferases. Catalyzes, on the cytoplasmic face of the endoplasmic reticulum, the addition of the first mannose residues to the dolichol-linked oligosaccharide chain, to produce Man1GlcNAc(2)-PP-dolichol core oligosaccharide. Man1GlcNAc(2)-PP-dolichol is a substrate for ALG2, the following enzyme in the biosynthetic pathway.</text>
</comment>
<comment type="catalytic activity">
    <reaction evidence="2">
        <text>an N,N'-diacetylchitobiosyl-diphospho-di-trans,poly-cis-dolichol + GDP-alpha-D-mannose = a beta-D-Man-(1-&gt;4)-beta-D-GlcNAc-(1-&gt;4)-alpha-D-GlcNAc-diphospho-di-trans,poly-cis-dolichol + GDP + H(+)</text>
        <dbReference type="Rhea" id="RHEA:13865"/>
        <dbReference type="Rhea" id="RHEA-COMP:19510"/>
        <dbReference type="Rhea" id="RHEA-COMP:19511"/>
        <dbReference type="ChEBI" id="CHEBI:15378"/>
        <dbReference type="ChEBI" id="CHEBI:57269"/>
        <dbReference type="ChEBI" id="CHEBI:57527"/>
        <dbReference type="ChEBI" id="CHEBI:58189"/>
        <dbReference type="ChEBI" id="CHEBI:58472"/>
        <dbReference type="EC" id="2.4.1.142"/>
    </reaction>
    <physiologicalReaction direction="left-to-right" evidence="2">
        <dbReference type="Rhea" id="RHEA:13866"/>
    </physiologicalReaction>
</comment>
<comment type="pathway">
    <text evidence="2">Protein modification; protein glycosylation.</text>
</comment>
<comment type="subcellular location">
    <subcellularLocation>
        <location evidence="1">Endoplasmic reticulum membrane</location>
        <topology evidence="1">Single-pass membrane protein</topology>
    </subcellularLocation>
</comment>
<comment type="similarity">
    <text evidence="5">Belongs to the glycosyltransferase group 1 family. Glycosyltransferase 33 subfamily.</text>
</comment>
<evidence type="ECO:0000250" key="1">
    <source>
        <dbReference type="UniProtKB" id="P16661"/>
    </source>
</evidence>
<evidence type="ECO:0000250" key="2">
    <source>
        <dbReference type="UniProtKB" id="Q9BT22"/>
    </source>
</evidence>
<evidence type="ECO:0000255" key="3"/>
<evidence type="ECO:0000256" key="4">
    <source>
        <dbReference type="SAM" id="MobiDB-lite"/>
    </source>
</evidence>
<evidence type="ECO:0000305" key="5"/>
<organism>
    <name type="scientific">Pongo abelii</name>
    <name type="common">Sumatran orangutan</name>
    <name type="synonym">Pongo pygmaeus abelii</name>
    <dbReference type="NCBI Taxonomy" id="9601"/>
    <lineage>
        <taxon>Eukaryota</taxon>
        <taxon>Metazoa</taxon>
        <taxon>Chordata</taxon>
        <taxon>Craniata</taxon>
        <taxon>Vertebrata</taxon>
        <taxon>Euteleostomi</taxon>
        <taxon>Mammalia</taxon>
        <taxon>Eutheria</taxon>
        <taxon>Euarchontoglires</taxon>
        <taxon>Primates</taxon>
        <taxon>Haplorrhini</taxon>
        <taxon>Catarrhini</taxon>
        <taxon>Hominidae</taxon>
        <taxon>Pongo</taxon>
    </lineage>
</organism>
<gene>
    <name evidence="2" type="primary">ALG1</name>
</gene>
<keyword id="KW-0256">Endoplasmic reticulum</keyword>
<keyword id="KW-0328">Glycosyltransferase</keyword>
<keyword id="KW-0472">Membrane</keyword>
<keyword id="KW-0597">Phosphoprotein</keyword>
<keyword id="KW-1185">Reference proteome</keyword>
<keyword id="KW-0735">Signal-anchor</keyword>
<keyword id="KW-0808">Transferase</keyword>
<keyword id="KW-0812">Transmembrane</keyword>
<keyword id="KW-1133">Transmembrane helix</keyword>
<dbReference type="EC" id="2.4.1.142" evidence="2"/>
<dbReference type="EMBL" id="CR860216">
    <property type="protein sequence ID" value="CAH92358.1"/>
    <property type="molecule type" value="mRNA"/>
</dbReference>
<dbReference type="RefSeq" id="NP_001126389.1">
    <property type="nucleotide sequence ID" value="NM_001132917.2"/>
</dbReference>
<dbReference type="FunCoup" id="Q5R7A2">
    <property type="interactions" value="2540"/>
</dbReference>
<dbReference type="STRING" id="9601.ENSPPYP00000008002"/>
<dbReference type="CAZy" id="GT33">
    <property type="family name" value="Glycosyltransferase Family 33"/>
</dbReference>
<dbReference type="GeneID" id="100173370"/>
<dbReference type="KEGG" id="pon:100173370"/>
<dbReference type="CTD" id="56052"/>
<dbReference type="eggNOG" id="KOG2941">
    <property type="taxonomic scope" value="Eukaryota"/>
</dbReference>
<dbReference type="HOGENOM" id="CLU_012079_0_0_1"/>
<dbReference type="InParanoid" id="Q5R7A2"/>
<dbReference type="OrthoDB" id="614844at2759"/>
<dbReference type="TreeFam" id="TF314121"/>
<dbReference type="UniPathway" id="UPA00378"/>
<dbReference type="Proteomes" id="UP000001595">
    <property type="component" value="Chromosome 16"/>
</dbReference>
<dbReference type="GO" id="GO:0098554">
    <property type="term" value="C:cytoplasmic side of endoplasmic reticulum membrane"/>
    <property type="evidence" value="ECO:0000250"/>
    <property type="project" value="UniProtKB"/>
</dbReference>
<dbReference type="GO" id="GO:0004578">
    <property type="term" value="F:chitobiosyldiphosphodolichol beta-mannosyltransferase activity"/>
    <property type="evidence" value="ECO:0000250"/>
    <property type="project" value="UniProtKB"/>
</dbReference>
<dbReference type="GO" id="GO:0006488">
    <property type="term" value="P:dolichol-linked oligosaccharide biosynthetic process"/>
    <property type="evidence" value="ECO:0000250"/>
    <property type="project" value="UniProtKB"/>
</dbReference>
<dbReference type="GO" id="GO:0006487">
    <property type="term" value="P:protein N-linked glycosylation"/>
    <property type="evidence" value="ECO:0000250"/>
    <property type="project" value="UniProtKB"/>
</dbReference>
<dbReference type="CDD" id="cd03816">
    <property type="entry name" value="GT33_ALG1-like"/>
    <property type="match status" value="1"/>
</dbReference>
<dbReference type="FunFam" id="3.40.50.2000:FF:000096">
    <property type="entry name" value="ALG1, chitobiosyldiphosphodolichol beta-mannosyltransferase"/>
    <property type="match status" value="1"/>
</dbReference>
<dbReference type="Gene3D" id="3.40.50.2000">
    <property type="entry name" value="Glycogen Phosphorylase B"/>
    <property type="match status" value="1"/>
</dbReference>
<dbReference type="InterPro" id="IPR026051">
    <property type="entry name" value="ALG1-like"/>
</dbReference>
<dbReference type="InterPro" id="IPR001296">
    <property type="entry name" value="Glyco_trans_1"/>
</dbReference>
<dbReference type="PANTHER" id="PTHR13036">
    <property type="entry name" value="BETA1,4 MANNOSYLTRANSFERASE"/>
    <property type="match status" value="1"/>
</dbReference>
<dbReference type="PANTHER" id="PTHR13036:SF0">
    <property type="entry name" value="CHITOBIOSYLDIPHOSPHODOLICHOL BETA-MANNOSYLTRANSFERASE"/>
    <property type="match status" value="1"/>
</dbReference>
<dbReference type="Pfam" id="PF00534">
    <property type="entry name" value="Glycos_transf_1"/>
    <property type="match status" value="1"/>
</dbReference>
<dbReference type="SUPFAM" id="SSF53756">
    <property type="entry name" value="UDP-Glycosyltransferase/glycogen phosphorylase"/>
    <property type="match status" value="1"/>
</dbReference>
<sequence length="464" mass="52505">MAASCLVLLALCLLLPLLLLGGWKRWRRGRTARHVVAVVLGDVGRSPRMQYHALSLAMHGFSVTLLGFCNSKPHDELLQNNRIQIVGLTELQSLAVGPRVFQYGVKVVFQAMYLLWKLMWREPGAYIFLQNPPGLPSIAVCWFVGCLCGSKLVIDWHNYGYSIMGLVHGPNHPLVLLAKWYERFFGRLSHLNLCVTNAMREDLAENWHIRAVTVYDKPASFFKETPLDLQHRLFMKLGGTHSPFRARSEPEDPATERSAFTERDAGSGLVTRLHERPALLVSSTSWTEDEDFSILLAALEKFEQLTLDGHSLPSLVCVITGKGPLREYYSHLIHQKHFQHIQVCTPWLEAEDYPLLLGSADLGVCLHTSSSGLDLPMKVVDMFGCHLPVCAVNFKCLHELVKHEENGLVFEDSEELAAQLQMLFSNFPDPAGKLNQFRKNLRESQQLRWDESWVQTVLPLVMDT</sequence>